<organism>
    <name type="scientific">Dehalococcoides mccartyi (strain ATCC BAA-2100 / JCM 16839 / KCTC 5957 / BAV1)</name>
    <dbReference type="NCBI Taxonomy" id="216389"/>
    <lineage>
        <taxon>Bacteria</taxon>
        <taxon>Bacillati</taxon>
        <taxon>Chloroflexota</taxon>
        <taxon>Dehalococcoidia</taxon>
        <taxon>Dehalococcoidales</taxon>
        <taxon>Dehalococcoidaceae</taxon>
        <taxon>Dehalococcoides</taxon>
    </lineage>
</organism>
<accession>A5FQ60</accession>
<proteinExistence type="inferred from homology"/>
<reference key="1">
    <citation type="submission" date="2007-05" db="EMBL/GenBank/DDBJ databases">
        <title>Complete sequence of Dehalococcoides sp. BAV1.</title>
        <authorList>
            <consortium name="US DOE Joint Genome Institute"/>
            <person name="Copeland A."/>
            <person name="Lucas S."/>
            <person name="Lapidus A."/>
            <person name="Barry K."/>
            <person name="Detter J.C."/>
            <person name="Glavina del Rio T."/>
            <person name="Hammon N."/>
            <person name="Israni S."/>
            <person name="Pitluck S."/>
            <person name="Lowry S."/>
            <person name="Clum A."/>
            <person name="Schmutz J."/>
            <person name="Larimer F."/>
            <person name="Land M."/>
            <person name="Hauser L."/>
            <person name="Kyrpides N."/>
            <person name="Kim E."/>
            <person name="Ritalahti K.M."/>
            <person name="Loeffler F."/>
            <person name="Richardson P."/>
        </authorList>
    </citation>
    <scope>NUCLEOTIDE SEQUENCE [LARGE SCALE GENOMIC DNA]</scope>
    <source>
        <strain>ATCC BAA-2100 / JCM 16839 / KCTC 5957 / BAV1</strain>
    </source>
</reference>
<gene>
    <name evidence="1" type="primary">rpmF</name>
    <name type="ordered locus">DehaBAV1_1086</name>
</gene>
<keyword id="KW-0687">Ribonucleoprotein</keyword>
<keyword id="KW-0689">Ribosomal protein</keyword>
<dbReference type="EMBL" id="CP000688">
    <property type="protein sequence ID" value="ABQ17666.1"/>
    <property type="molecule type" value="Genomic_DNA"/>
</dbReference>
<dbReference type="SMR" id="A5FQ60"/>
<dbReference type="KEGG" id="deb:DehaBAV1_1086"/>
<dbReference type="PATRIC" id="fig|216389.18.peg.1148"/>
<dbReference type="HOGENOM" id="CLU_129084_1_3_0"/>
<dbReference type="GO" id="GO:0015934">
    <property type="term" value="C:large ribosomal subunit"/>
    <property type="evidence" value="ECO:0007669"/>
    <property type="project" value="InterPro"/>
</dbReference>
<dbReference type="GO" id="GO:0003735">
    <property type="term" value="F:structural constituent of ribosome"/>
    <property type="evidence" value="ECO:0007669"/>
    <property type="project" value="InterPro"/>
</dbReference>
<dbReference type="GO" id="GO:0006412">
    <property type="term" value="P:translation"/>
    <property type="evidence" value="ECO:0007669"/>
    <property type="project" value="UniProtKB-UniRule"/>
</dbReference>
<dbReference type="HAMAP" id="MF_00340">
    <property type="entry name" value="Ribosomal_bL32"/>
    <property type="match status" value="1"/>
</dbReference>
<dbReference type="InterPro" id="IPR002677">
    <property type="entry name" value="Ribosomal_bL32"/>
</dbReference>
<dbReference type="InterPro" id="IPR044957">
    <property type="entry name" value="Ribosomal_bL32_bact"/>
</dbReference>
<dbReference type="InterPro" id="IPR011332">
    <property type="entry name" value="Ribosomal_zn-bd"/>
</dbReference>
<dbReference type="NCBIfam" id="TIGR01031">
    <property type="entry name" value="rpmF_bact"/>
    <property type="match status" value="1"/>
</dbReference>
<dbReference type="PANTHER" id="PTHR35534">
    <property type="entry name" value="50S RIBOSOMAL PROTEIN L32"/>
    <property type="match status" value="1"/>
</dbReference>
<dbReference type="PANTHER" id="PTHR35534:SF1">
    <property type="entry name" value="LARGE RIBOSOMAL SUBUNIT PROTEIN BL32"/>
    <property type="match status" value="1"/>
</dbReference>
<dbReference type="Pfam" id="PF01783">
    <property type="entry name" value="Ribosomal_L32p"/>
    <property type="match status" value="1"/>
</dbReference>
<dbReference type="SUPFAM" id="SSF57829">
    <property type="entry name" value="Zn-binding ribosomal proteins"/>
    <property type="match status" value="1"/>
</dbReference>
<feature type="chain" id="PRO_1000079326" description="Large ribosomal subunit protein bL32">
    <location>
        <begin position="1"/>
        <end position="72"/>
    </location>
</feature>
<evidence type="ECO:0000255" key="1">
    <source>
        <dbReference type="HAMAP-Rule" id="MF_00340"/>
    </source>
</evidence>
<evidence type="ECO:0000305" key="2"/>
<comment type="similarity">
    <text evidence="1">Belongs to the bacterial ribosomal protein bL32 family.</text>
</comment>
<protein>
    <recommendedName>
        <fullName evidence="1">Large ribosomal subunit protein bL32</fullName>
    </recommendedName>
    <alternativeName>
        <fullName evidence="2">50S ribosomal protein L32</fullName>
    </alternativeName>
</protein>
<name>RL32_DEHMB</name>
<sequence>MALPKRRLSHSRQGNHRAHVALTAPAVMECPQCNSPKLSHQACSVCGTYNGRTVIDMEAIAKKKADKSKGQQ</sequence>